<keyword id="KW-0963">Cytoplasm</keyword>
<keyword id="KW-0448">Lipopolysaccharide biosynthesis</keyword>
<keyword id="KW-0548">Nucleotidyltransferase</keyword>
<keyword id="KW-1185">Reference proteome</keyword>
<keyword id="KW-0808">Transferase</keyword>
<organism>
    <name type="scientific">Dichelobacter nodosus (strain VCS1703A)</name>
    <dbReference type="NCBI Taxonomy" id="246195"/>
    <lineage>
        <taxon>Bacteria</taxon>
        <taxon>Pseudomonadati</taxon>
        <taxon>Pseudomonadota</taxon>
        <taxon>Gammaproteobacteria</taxon>
        <taxon>Cardiobacteriales</taxon>
        <taxon>Cardiobacteriaceae</taxon>
        <taxon>Dichelobacter</taxon>
    </lineage>
</organism>
<comment type="function">
    <text evidence="1">Activates KDO (a required 8-carbon sugar) for incorporation into bacterial lipopolysaccharide in Gram-negative bacteria.</text>
</comment>
<comment type="catalytic activity">
    <reaction evidence="1">
        <text>3-deoxy-alpha-D-manno-oct-2-ulosonate + CTP = CMP-3-deoxy-beta-D-manno-octulosonate + diphosphate</text>
        <dbReference type="Rhea" id="RHEA:23448"/>
        <dbReference type="ChEBI" id="CHEBI:33019"/>
        <dbReference type="ChEBI" id="CHEBI:37563"/>
        <dbReference type="ChEBI" id="CHEBI:85986"/>
        <dbReference type="ChEBI" id="CHEBI:85987"/>
        <dbReference type="EC" id="2.7.7.38"/>
    </reaction>
</comment>
<comment type="pathway">
    <text evidence="1">Nucleotide-sugar biosynthesis; CMP-3-deoxy-D-manno-octulosonate biosynthesis; CMP-3-deoxy-D-manno-octulosonate from 3-deoxy-D-manno-octulosonate and CTP: step 1/1.</text>
</comment>
<comment type="pathway">
    <text evidence="1">Bacterial outer membrane biogenesis; lipopolysaccharide biosynthesis.</text>
</comment>
<comment type="subcellular location">
    <subcellularLocation>
        <location evidence="1">Cytoplasm</location>
    </subcellularLocation>
</comment>
<comment type="similarity">
    <text evidence="1">Belongs to the KdsB family.</text>
</comment>
<protein>
    <recommendedName>
        <fullName evidence="1">3-deoxy-manno-octulosonate cytidylyltransferase</fullName>
        <ecNumber evidence="1">2.7.7.38</ecNumber>
    </recommendedName>
    <alternativeName>
        <fullName evidence="1">CMP-2-keto-3-deoxyoctulosonic acid synthase</fullName>
        <shortName evidence="1">CKS</shortName>
        <shortName evidence="1">CMP-KDO synthase</shortName>
    </alternativeName>
</protein>
<sequence length="244" mass="26787">MTPDIRVVIPARYASTRLPAKPLALIGGVPMIVRTAQQVAQAGFPYCVAYDDERIGDVLAAHHIPAIKTRFTHENGTQRLSEVVIARAWTDETIVVNVQGDEPLLPPDLITTVARTLIEHTQASVATLATVCDAPESPNTVKVVCDCAGYALYFSRSVMPYVRDAAAPPVSYLRHIGIYAYRVQLLKRYPQLAPTPLEQAEKLEQLRFLEHGFKIAVAQIDEAPPAGVDSPEDLARVQALFVHE</sequence>
<accession>A5EW69</accession>
<proteinExistence type="inferred from homology"/>
<dbReference type="EC" id="2.7.7.38" evidence="1"/>
<dbReference type="EMBL" id="CP000513">
    <property type="protein sequence ID" value="ABQ13530.1"/>
    <property type="molecule type" value="Genomic_DNA"/>
</dbReference>
<dbReference type="RefSeq" id="WP_012030648.1">
    <property type="nucleotide sequence ID" value="NC_009446.1"/>
</dbReference>
<dbReference type="SMR" id="A5EW69"/>
<dbReference type="STRING" id="246195.DNO_0304"/>
<dbReference type="KEGG" id="dno:DNO_0304"/>
<dbReference type="eggNOG" id="COG1212">
    <property type="taxonomic scope" value="Bacteria"/>
</dbReference>
<dbReference type="HOGENOM" id="CLU_065038_1_0_6"/>
<dbReference type="OrthoDB" id="9815559at2"/>
<dbReference type="UniPathway" id="UPA00030"/>
<dbReference type="UniPathway" id="UPA00358">
    <property type="reaction ID" value="UER00476"/>
</dbReference>
<dbReference type="Proteomes" id="UP000000248">
    <property type="component" value="Chromosome"/>
</dbReference>
<dbReference type="GO" id="GO:0005829">
    <property type="term" value="C:cytosol"/>
    <property type="evidence" value="ECO:0007669"/>
    <property type="project" value="TreeGrafter"/>
</dbReference>
<dbReference type="GO" id="GO:0008690">
    <property type="term" value="F:3-deoxy-manno-octulosonate cytidylyltransferase activity"/>
    <property type="evidence" value="ECO:0007669"/>
    <property type="project" value="UniProtKB-UniRule"/>
</dbReference>
<dbReference type="GO" id="GO:0033468">
    <property type="term" value="P:CMP-keto-3-deoxy-D-manno-octulosonic acid biosynthetic process"/>
    <property type="evidence" value="ECO:0007669"/>
    <property type="project" value="UniProtKB-UniRule"/>
</dbReference>
<dbReference type="GO" id="GO:0009103">
    <property type="term" value="P:lipopolysaccharide biosynthetic process"/>
    <property type="evidence" value="ECO:0007669"/>
    <property type="project" value="UniProtKB-UniRule"/>
</dbReference>
<dbReference type="CDD" id="cd02517">
    <property type="entry name" value="CMP-KDO-Synthetase"/>
    <property type="match status" value="1"/>
</dbReference>
<dbReference type="FunFam" id="3.90.550.10:FF:000011">
    <property type="entry name" value="3-deoxy-manno-octulosonate cytidylyltransferase"/>
    <property type="match status" value="1"/>
</dbReference>
<dbReference type="Gene3D" id="3.90.550.10">
    <property type="entry name" value="Spore Coat Polysaccharide Biosynthesis Protein SpsA, Chain A"/>
    <property type="match status" value="1"/>
</dbReference>
<dbReference type="HAMAP" id="MF_00057">
    <property type="entry name" value="KdsB"/>
    <property type="match status" value="1"/>
</dbReference>
<dbReference type="InterPro" id="IPR003329">
    <property type="entry name" value="Cytidylyl_trans"/>
</dbReference>
<dbReference type="InterPro" id="IPR004528">
    <property type="entry name" value="KdsB"/>
</dbReference>
<dbReference type="InterPro" id="IPR029044">
    <property type="entry name" value="Nucleotide-diphossugar_trans"/>
</dbReference>
<dbReference type="NCBIfam" id="TIGR00466">
    <property type="entry name" value="kdsB"/>
    <property type="match status" value="1"/>
</dbReference>
<dbReference type="NCBIfam" id="NF003952">
    <property type="entry name" value="PRK05450.1-5"/>
    <property type="match status" value="1"/>
</dbReference>
<dbReference type="PANTHER" id="PTHR42866">
    <property type="entry name" value="3-DEOXY-MANNO-OCTULOSONATE CYTIDYLYLTRANSFERASE"/>
    <property type="match status" value="1"/>
</dbReference>
<dbReference type="PANTHER" id="PTHR42866:SF2">
    <property type="entry name" value="3-DEOXY-MANNO-OCTULOSONATE CYTIDYLYLTRANSFERASE, MITOCHONDRIAL"/>
    <property type="match status" value="1"/>
</dbReference>
<dbReference type="Pfam" id="PF02348">
    <property type="entry name" value="CTP_transf_3"/>
    <property type="match status" value="1"/>
</dbReference>
<dbReference type="SUPFAM" id="SSF53448">
    <property type="entry name" value="Nucleotide-diphospho-sugar transferases"/>
    <property type="match status" value="1"/>
</dbReference>
<reference key="1">
    <citation type="journal article" date="2007" name="Nat. Biotechnol.">
        <title>Genome sequence and identification of candidate vaccine antigens from the animal pathogen Dichelobacter nodosus.</title>
        <authorList>
            <person name="Myers G.S.A."/>
            <person name="Parker D."/>
            <person name="Al-Hasani K."/>
            <person name="Kennan R.M."/>
            <person name="Seemann T."/>
            <person name="Ren Q."/>
            <person name="Badger J.H."/>
            <person name="Selengut J.D."/>
            <person name="Deboy R.T."/>
            <person name="Tettelin H."/>
            <person name="Boyce J.D."/>
            <person name="McCarl V.P."/>
            <person name="Han X."/>
            <person name="Nelson W.C."/>
            <person name="Madupu R."/>
            <person name="Mohamoud Y."/>
            <person name="Holley T."/>
            <person name="Fedorova N."/>
            <person name="Khouri H."/>
            <person name="Bottomley S.P."/>
            <person name="Whittington R.J."/>
            <person name="Adler B."/>
            <person name="Songer J.G."/>
            <person name="Rood J.I."/>
            <person name="Paulsen I.T."/>
        </authorList>
    </citation>
    <scope>NUCLEOTIDE SEQUENCE [LARGE SCALE GENOMIC DNA]</scope>
    <source>
        <strain>VCS1703A</strain>
    </source>
</reference>
<name>KDSB_DICNV</name>
<evidence type="ECO:0000255" key="1">
    <source>
        <dbReference type="HAMAP-Rule" id="MF_00057"/>
    </source>
</evidence>
<feature type="chain" id="PRO_0000370064" description="3-deoxy-manno-octulosonate cytidylyltransferase">
    <location>
        <begin position="1"/>
        <end position="244"/>
    </location>
</feature>
<gene>
    <name evidence="1" type="primary">kdsB</name>
    <name type="ordered locus">DNO_0304</name>
</gene>